<name>2KGR_GLUOX</name>
<protein>
    <recommendedName>
        <fullName evidence="4">2-ketogluconate reductase</fullName>
        <shortName evidence="3 4">2KGR</shortName>
        <ecNumber evidence="2">1.1.1.215</ecNumber>
    </recommendedName>
    <alternativeName>
        <fullName evidence="5">Gluconate 2-dehydrogenase</fullName>
    </alternativeName>
</protein>
<accession>Q5FTU6</accession>
<sequence length="310" mass="33146">MSSKPDILTIDPLVPVMKERLEKSFTLHPYTSLENLKNIAPAIRGITTGGGSGVPSEIMDALPNLEVISVNGVGTDRINLDEARRRNIGVAITQNTLTDDVADMAVALMMAVMRSIVTNDAFVRAGKWPSATAPLGRSLTRKKVGIAGFGHIGQAIAKRVSAFGMEVAYFNSHARPESTCHFEPDLKALATWCDVLILAVSGGPRSANMIDRDTLDALGKDGFLVNIARGTVVDEAALLSALQEKRIAGAGLDVFQNEPNINPAFLSLPNTVLQAHQASATVETRTTMANLVVDNLIAYFTDKTLLTPVI</sequence>
<gene>
    <name evidence="7" type="ordered locus">GOX0417</name>
</gene>
<keyword id="KW-0903">Direct protein sequencing</keyword>
<keyword id="KW-0311">Gluconate utilization</keyword>
<keyword id="KW-0520">NAD</keyword>
<keyword id="KW-0521">NADP</keyword>
<keyword id="KW-0560">Oxidoreductase</keyword>
<keyword id="KW-1185">Reference proteome</keyword>
<dbReference type="EC" id="1.1.1.215" evidence="2"/>
<dbReference type="EMBL" id="CP000009">
    <property type="protein sequence ID" value="AAW60200.1"/>
    <property type="molecule type" value="Genomic_DNA"/>
</dbReference>
<dbReference type="RefSeq" id="WP_011252001.1">
    <property type="nucleotide sequence ID" value="NC_006677.1"/>
</dbReference>
<dbReference type="SMR" id="Q5FTU6"/>
<dbReference type="STRING" id="290633.GOX0417"/>
<dbReference type="KEGG" id="gox:GOX0417"/>
<dbReference type="eggNOG" id="COG1052">
    <property type="taxonomic scope" value="Bacteria"/>
</dbReference>
<dbReference type="HOGENOM" id="CLU_019796_1_2_5"/>
<dbReference type="BRENDA" id="1.1.1.215">
    <property type="organism ID" value="38"/>
</dbReference>
<dbReference type="Proteomes" id="UP000006375">
    <property type="component" value="Chromosome"/>
</dbReference>
<dbReference type="GO" id="GO:0005829">
    <property type="term" value="C:cytosol"/>
    <property type="evidence" value="ECO:0007669"/>
    <property type="project" value="TreeGrafter"/>
</dbReference>
<dbReference type="GO" id="GO:0008873">
    <property type="term" value="F:gluconate 2-dehydrogenase activity"/>
    <property type="evidence" value="ECO:0007669"/>
    <property type="project" value="UniProtKB-EC"/>
</dbReference>
<dbReference type="GO" id="GO:0030267">
    <property type="term" value="F:glyoxylate reductase (NADPH) activity"/>
    <property type="evidence" value="ECO:0007669"/>
    <property type="project" value="TreeGrafter"/>
</dbReference>
<dbReference type="GO" id="GO:0016618">
    <property type="term" value="F:hydroxypyruvate reductase [NAD(P)H] activity"/>
    <property type="evidence" value="ECO:0007669"/>
    <property type="project" value="TreeGrafter"/>
</dbReference>
<dbReference type="GO" id="GO:0051287">
    <property type="term" value="F:NAD binding"/>
    <property type="evidence" value="ECO:0007669"/>
    <property type="project" value="InterPro"/>
</dbReference>
<dbReference type="GO" id="GO:0019521">
    <property type="term" value="P:D-gluconate metabolic process"/>
    <property type="evidence" value="ECO:0007669"/>
    <property type="project" value="UniProtKB-KW"/>
</dbReference>
<dbReference type="CDD" id="cd12156">
    <property type="entry name" value="HPPR"/>
    <property type="match status" value="1"/>
</dbReference>
<dbReference type="FunFam" id="3.40.50.720:FF:000213">
    <property type="entry name" value="Putative 2-hydroxyacid dehydrogenase"/>
    <property type="match status" value="1"/>
</dbReference>
<dbReference type="Gene3D" id="3.40.50.720">
    <property type="entry name" value="NAD(P)-binding Rossmann-like Domain"/>
    <property type="match status" value="2"/>
</dbReference>
<dbReference type="InterPro" id="IPR050223">
    <property type="entry name" value="D-isomer_2-hydroxyacid_DH"/>
</dbReference>
<dbReference type="InterPro" id="IPR006139">
    <property type="entry name" value="D-isomer_2_OHA_DH_cat_dom"/>
</dbReference>
<dbReference type="InterPro" id="IPR006140">
    <property type="entry name" value="D-isomer_DH_NAD-bd"/>
</dbReference>
<dbReference type="InterPro" id="IPR036291">
    <property type="entry name" value="NAD(P)-bd_dom_sf"/>
</dbReference>
<dbReference type="PANTHER" id="PTHR10996:SF178">
    <property type="entry name" value="2-HYDROXYACID DEHYDROGENASE YGL185C-RELATED"/>
    <property type="match status" value="1"/>
</dbReference>
<dbReference type="PANTHER" id="PTHR10996">
    <property type="entry name" value="2-HYDROXYACID DEHYDROGENASE-RELATED"/>
    <property type="match status" value="1"/>
</dbReference>
<dbReference type="Pfam" id="PF00389">
    <property type="entry name" value="2-Hacid_dh"/>
    <property type="match status" value="1"/>
</dbReference>
<dbReference type="Pfam" id="PF02826">
    <property type="entry name" value="2-Hacid_dh_C"/>
    <property type="match status" value="1"/>
</dbReference>
<dbReference type="SUPFAM" id="SSF52283">
    <property type="entry name" value="Formate/glycerate dehydrogenase catalytic domain-like"/>
    <property type="match status" value="1"/>
</dbReference>
<dbReference type="SUPFAM" id="SSF51735">
    <property type="entry name" value="NAD(P)-binding Rossmann-fold domains"/>
    <property type="match status" value="1"/>
</dbReference>
<reference key="1">
    <citation type="journal article" date="2005" name="Nat. Biotechnol.">
        <title>Complete genome sequence of the acetic acid bacterium Gluconobacter oxydans.</title>
        <authorList>
            <person name="Prust C."/>
            <person name="Hoffmeister M."/>
            <person name="Liesegang H."/>
            <person name="Wiezer A."/>
            <person name="Fricke W.F."/>
            <person name="Ehrenreich A."/>
            <person name="Gottschalk G."/>
            <person name="Deppenmeier U."/>
        </authorList>
    </citation>
    <scope>NUCLEOTIDE SEQUENCE [LARGE SCALE GENOMIC DNA]</scope>
    <source>
        <strain>621H</strain>
    </source>
</reference>
<reference key="2">
    <citation type="journal article" date="2007" name="Biosci. Biotechnol. Biochem.">
        <title>Preparation of enzymes required for enzymatic quantification of 5-keto-D-gluconate and 2-keto-D-gluconate.</title>
        <authorList>
            <person name="Saichana I."/>
            <person name="Ano Y."/>
            <person name="Adachi O."/>
            <person name="Matsushita K."/>
            <person name="Toyama H."/>
        </authorList>
    </citation>
    <scope>PROTEIN SEQUENCE OF 2-11</scope>
    <source>
        <strain>ATCC 621 / DSM 50049 / NBRC 3172 / NCIMB 7069 / NRRL B-72</strain>
    </source>
</reference>
<reference key="3">
    <citation type="journal article" date="2010" name="Appl. Microbiol. Biotechnol.">
        <title>Characterization of enzymes involved in the central metabolism of Gluconobacter oxydans.</title>
        <authorList>
            <person name="Rauch B."/>
            <person name="Pahlke J."/>
            <person name="Schweiger P."/>
            <person name="Deppenmeier U."/>
        </authorList>
    </citation>
    <scope>FUNCTION</scope>
    <scope>CATALYTIC ACTIVITY</scope>
    <scope>BIOPHYSICOCHEMICAL PROPERTIES</scope>
    <scope>SUBUNIT</scope>
    <source>
        <strain>621H</strain>
    </source>
</reference>
<proteinExistence type="evidence at protein level"/>
<evidence type="ECO:0000250" key="1">
    <source>
        <dbReference type="UniProtKB" id="Q9I3W9"/>
    </source>
</evidence>
<evidence type="ECO:0000269" key="2">
    <source>
    </source>
</evidence>
<evidence type="ECO:0000303" key="3">
    <source>
    </source>
</evidence>
<evidence type="ECO:0000303" key="4">
    <source>
    </source>
</evidence>
<evidence type="ECO:0000305" key="5"/>
<evidence type="ECO:0000305" key="6">
    <source>
    </source>
</evidence>
<evidence type="ECO:0000312" key="7">
    <source>
        <dbReference type="EMBL" id="AAW60200.1"/>
    </source>
</evidence>
<organism>
    <name type="scientific">Gluconobacter oxydans (strain 621H)</name>
    <name type="common">Gluconobacter suboxydans</name>
    <dbReference type="NCBI Taxonomy" id="290633"/>
    <lineage>
        <taxon>Bacteria</taxon>
        <taxon>Pseudomonadati</taxon>
        <taxon>Pseudomonadota</taxon>
        <taxon>Alphaproteobacteria</taxon>
        <taxon>Acetobacterales</taxon>
        <taxon>Acetobacteraceae</taxon>
        <taxon>Gluconobacter</taxon>
    </lineage>
</organism>
<feature type="initiator methionine" description="Removed" evidence="6">
    <location>
        <position position="1"/>
    </location>
</feature>
<feature type="chain" id="PRO_0000434438" description="2-ketogluconate reductase">
    <location>
        <begin position="2"/>
        <end position="310"/>
    </location>
</feature>
<feature type="active site" evidence="1">
    <location>
        <position position="229"/>
    </location>
</feature>
<feature type="active site" evidence="1">
    <location>
        <position position="258"/>
    </location>
</feature>
<feature type="active site" description="Proton donor" evidence="1">
    <location>
        <position position="276"/>
    </location>
</feature>
<feature type="binding site" evidence="1">
    <location>
        <begin position="151"/>
        <end position="152"/>
    </location>
    <ligand>
        <name>NADP(+)</name>
        <dbReference type="ChEBI" id="CHEBI:58349"/>
    </ligand>
</feature>
<feature type="binding site" evidence="1">
    <location>
        <begin position="227"/>
        <end position="229"/>
    </location>
    <ligand>
        <name>NADP(+)</name>
        <dbReference type="ChEBI" id="CHEBI:58349"/>
    </ligand>
</feature>
<feature type="sequence conflict" description="In Ref. 2; AA sequence." evidence="5" ref="2">
    <original>T</original>
    <variation>A</variation>
    <location>
        <position position="9"/>
    </location>
</feature>
<comment type="function">
    <text evidence="2">Catalyzes the reduction of 2-keto-D-gluconate to gluconate. Can also catalyze the reduction of 2-keto-L-gulonate. Can use both NADH and NADPH efficiently, with a slight preference for NADPH.</text>
</comment>
<comment type="catalytic activity">
    <reaction evidence="2">
        <text>D-gluconate + NADP(+) = 2-dehydro-D-gluconate + NADPH + H(+)</text>
        <dbReference type="Rhea" id="RHEA:16653"/>
        <dbReference type="ChEBI" id="CHEBI:15378"/>
        <dbReference type="ChEBI" id="CHEBI:16808"/>
        <dbReference type="ChEBI" id="CHEBI:18391"/>
        <dbReference type="ChEBI" id="CHEBI:57783"/>
        <dbReference type="ChEBI" id="CHEBI:58349"/>
        <dbReference type="EC" id="1.1.1.215"/>
    </reaction>
</comment>
<comment type="biophysicochemical properties">
    <kinetics>
        <KM evidence="2">5.16 mM for 2-ketogluconate</KM>
        <KM evidence="2">51.5 uM for NADH</KM>
        <KM evidence="2">10 uM for NADPH</KM>
        <Vmax evidence="2">86.7 umol/min/mg enzyme</Vmax>
        <text evidence="2">kcat is 48.2 sec(-1).</text>
    </kinetics>
</comment>
<comment type="subunit">
    <text evidence="2">Homohexamer.</text>
</comment>
<comment type="similarity">
    <text evidence="5">Belongs to the D-isomer specific 2-hydroxyacid dehydrogenase family.</text>
</comment>